<proteinExistence type="inferred from homology"/>
<organism>
    <name type="scientific">Mesorhizobium japonicum (strain LMG 29417 / CECT 9101 / MAFF 303099)</name>
    <name type="common">Mesorhizobium loti (strain MAFF 303099)</name>
    <dbReference type="NCBI Taxonomy" id="266835"/>
    <lineage>
        <taxon>Bacteria</taxon>
        <taxon>Pseudomonadati</taxon>
        <taxon>Pseudomonadota</taxon>
        <taxon>Alphaproteobacteria</taxon>
        <taxon>Hyphomicrobiales</taxon>
        <taxon>Phyllobacteriaceae</taxon>
        <taxon>Mesorhizobium</taxon>
    </lineage>
</organism>
<evidence type="ECO:0000255" key="1">
    <source>
        <dbReference type="HAMAP-Rule" id="MF_00984"/>
    </source>
</evidence>
<evidence type="ECO:0000256" key="2">
    <source>
        <dbReference type="SAM" id="MobiDB-lite"/>
    </source>
</evidence>
<reference key="1">
    <citation type="journal article" date="2000" name="DNA Res.">
        <title>Complete genome structure of the nitrogen-fixing symbiotic bacterium Mesorhizobium loti.</title>
        <authorList>
            <person name="Kaneko T."/>
            <person name="Nakamura Y."/>
            <person name="Sato S."/>
            <person name="Asamizu E."/>
            <person name="Kato T."/>
            <person name="Sasamoto S."/>
            <person name="Watanabe A."/>
            <person name="Idesawa K."/>
            <person name="Ishikawa A."/>
            <person name="Kawashima K."/>
            <person name="Kimura T."/>
            <person name="Kishida Y."/>
            <person name="Kiyokawa C."/>
            <person name="Kohara M."/>
            <person name="Matsumoto M."/>
            <person name="Matsuno A."/>
            <person name="Mochizuki Y."/>
            <person name="Nakayama S."/>
            <person name="Nakazaki N."/>
            <person name="Shimpo S."/>
            <person name="Sugimoto M."/>
            <person name="Takeuchi C."/>
            <person name="Yamada M."/>
            <person name="Tabata S."/>
        </authorList>
    </citation>
    <scope>NUCLEOTIDE SEQUENCE [LARGE SCALE GENOMIC DNA]</scope>
    <source>
        <strain>LMG 29417 / CECT 9101 / MAFF 303099</strain>
    </source>
</reference>
<sequence length="172" mass="18563">MAGSVNKVILVGNLGADPEIRRLNSGEPVVNIRIATSESWRDKNSGERKEKTEWHNVVIFNEGIAKVAEQYLKKGMKVYVEGQLQTRKWQDQTGADKYTTEVVLQRFRGELQMLDGRQGEGGQVGGYSGGGSSRGSDFGQSGPNESFNRGGGAPRGGGGGGSSRELDDEIPF</sequence>
<dbReference type="EMBL" id="BA000012">
    <property type="protein sequence ID" value="BAB48272.1"/>
    <property type="molecule type" value="Genomic_DNA"/>
</dbReference>
<dbReference type="RefSeq" id="WP_010909627.1">
    <property type="nucleotide sequence ID" value="NC_002678.2"/>
</dbReference>
<dbReference type="SMR" id="Q98M41"/>
<dbReference type="KEGG" id="mlo:mll0743"/>
<dbReference type="eggNOG" id="COG0629">
    <property type="taxonomic scope" value="Bacteria"/>
</dbReference>
<dbReference type="HOGENOM" id="CLU_078758_0_1_5"/>
<dbReference type="Proteomes" id="UP000000552">
    <property type="component" value="Chromosome"/>
</dbReference>
<dbReference type="GO" id="GO:0009295">
    <property type="term" value="C:nucleoid"/>
    <property type="evidence" value="ECO:0007669"/>
    <property type="project" value="TreeGrafter"/>
</dbReference>
<dbReference type="GO" id="GO:0003697">
    <property type="term" value="F:single-stranded DNA binding"/>
    <property type="evidence" value="ECO:0007669"/>
    <property type="project" value="UniProtKB-UniRule"/>
</dbReference>
<dbReference type="GO" id="GO:0006310">
    <property type="term" value="P:DNA recombination"/>
    <property type="evidence" value="ECO:0007669"/>
    <property type="project" value="UniProtKB-UniRule"/>
</dbReference>
<dbReference type="GO" id="GO:0006281">
    <property type="term" value="P:DNA repair"/>
    <property type="evidence" value="ECO:0007669"/>
    <property type="project" value="UniProtKB-UniRule"/>
</dbReference>
<dbReference type="GO" id="GO:0006260">
    <property type="term" value="P:DNA replication"/>
    <property type="evidence" value="ECO:0007669"/>
    <property type="project" value="UniProtKB-UniRule"/>
</dbReference>
<dbReference type="CDD" id="cd04496">
    <property type="entry name" value="SSB_OBF"/>
    <property type="match status" value="1"/>
</dbReference>
<dbReference type="Gene3D" id="2.40.50.140">
    <property type="entry name" value="Nucleic acid-binding proteins"/>
    <property type="match status" value="1"/>
</dbReference>
<dbReference type="HAMAP" id="MF_00984">
    <property type="entry name" value="SSB"/>
    <property type="match status" value="1"/>
</dbReference>
<dbReference type="InterPro" id="IPR012340">
    <property type="entry name" value="NA-bd_OB-fold"/>
</dbReference>
<dbReference type="InterPro" id="IPR000424">
    <property type="entry name" value="Primosome_PriB/ssb"/>
</dbReference>
<dbReference type="InterPro" id="IPR011344">
    <property type="entry name" value="ssDNA-bd"/>
</dbReference>
<dbReference type="NCBIfam" id="NF004972">
    <property type="entry name" value="PRK06341.1"/>
    <property type="match status" value="1"/>
</dbReference>
<dbReference type="NCBIfam" id="TIGR00621">
    <property type="entry name" value="ssb"/>
    <property type="match status" value="1"/>
</dbReference>
<dbReference type="PANTHER" id="PTHR10302">
    <property type="entry name" value="SINGLE-STRANDED DNA-BINDING PROTEIN"/>
    <property type="match status" value="1"/>
</dbReference>
<dbReference type="PANTHER" id="PTHR10302:SF27">
    <property type="entry name" value="SINGLE-STRANDED DNA-BINDING PROTEIN"/>
    <property type="match status" value="1"/>
</dbReference>
<dbReference type="Pfam" id="PF00436">
    <property type="entry name" value="SSB"/>
    <property type="match status" value="1"/>
</dbReference>
<dbReference type="SUPFAM" id="SSF50249">
    <property type="entry name" value="Nucleic acid-binding proteins"/>
    <property type="match status" value="1"/>
</dbReference>
<dbReference type="PROSITE" id="PS50935">
    <property type="entry name" value="SSB"/>
    <property type="match status" value="1"/>
</dbReference>
<feature type="chain" id="PRO_0000096084" description="Single-stranded DNA-binding protein">
    <location>
        <begin position="1"/>
        <end position="172"/>
    </location>
</feature>
<feature type="domain" description="SSB" evidence="1">
    <location>
        <begin position="5"/>
        <end position="111"/>
    </location>
</feature>
<feature type="region of interest" description="Disordered" evidence="2">
    <location>
        <begin position="114"/>
        <end position="172"/>
    </location>
</feature>
<feature type="short sequence motif" description="Important for interaction with partner proteins" evidence="1">
    <location>
        <begin position="167"/>
        <end position="172"/>
    </location>
</feature>
<feature type="compositionally biased region" description="Gly residues" evidence="2">
    <location>
        <begin position="119"/>
        <end position="133"/>
    </location>
</feature>
<feature type="compositionally biased region" description="Gly residues" evidence="2">
    <location>
        <begin position="149"/>
        <end position="162"/>
    </location>
</feature>
<comment type="function">
    <text evidence="1">Plays an important role in DNA replication, recombination and repair. Binds to ssDNA and to an array of partner proteins to recruit them to their sites of action during DNA metabolism.</text>
</comment>
<comment type="subunit">
    <text evidence="1">Homotetramer.</text>
</comment>
<name>SSB_RHILO</name>
<protein>
    <recommendedName>
        <fullName evidence="1">Single-stranded DNA-binding protein</fullName>
        <shortName evidence="1">SSB</shortName>
    </recommendedName>
</protein>
<accession>Q98M41</accession>
<gene>
    <name type="primary">ssb</name>
    <name type="ordered locus">mll0743</name>
</gene>
<keyword id="KW-0227">DNA damage</keyword>
<keyword id="KW-0233">DNA recombination</keyword>
<keyword id="KW-0234">DNA repair</keyword>
<keyword id="KW-0235">DNA replication</keyword>
<keyword id="KW-0238">DNA-binding</keyword>